<evidence type="ECO:0000255" key="1"/>
<evidence type="ECO:0000256" key="2">
    <source>
        <dbReference type="SAM" id="MobiDB-lite"/>
    </source>
</evidence>
<evidence type="ECO:0000269" key="3">
    <source>
    </source>
</evidence>
<evidence type="ECO:0000269" key="4">
    <source>
    </source>
</evidence>
<evidence type="ECO:0000269" key="5">
    <source>
    </source>
</evidence>
<evidence type="ECO:0000269" key="6">
    <source>
    </source>
</evidence>
<evidence type="ECO:0000269" key="7">
    <source>
    </source>
</evidence>
<evidence type="ECO:0007744" key="8">
    <source>
    </source>
</evidence>
<sequence length="1165" mass="128140">MTEEDRKLTVETETVEAPVANNLLLSNNSNVVAPNPSIPSASTSTSPLHREIVDDSVATANTTSNVVQHNLPTIDNNLMDSDATSHNQDHWHSDINRAGTSMSTSDIPTDLHLEHIGSVSSTNNNSNNALINHNPLSSHLSNPSSSLRNKKSSLLVASNPAFASDVELSKKKPAVISNNMPTSNIALYQTARSANIHGPSSTSASKAFRKASAFSNNTAPSTSNNIGSNTPPAPLLPLPSLSQQNKPKIIERPTMHVTNSREILLGENLLDDTKAKNAPANSTTHDNGPVANDGLRIPNHSNADDNENNNKMKKNKNINSGKNERNDDTSKICTTSTKTAPSTAPLGSTDNTQALTASVSSSNADNHNNNKKKTSSNNNGNNSNSASNKTNADIKNSNADLSASTSNNNAINDDSHESNSEKPTKADFFAARLATAVGENEISDSEETFVYESAANSTKNLIFPDSSSQQQQQQQQPPKQQQQQQNHGITSKISAPLLNNNKKLLSRLKNSRHISTGAILNNTIATISTNPNLNSNVMQNNNNLMSGHNHLDELSSIKQEPPHQLQQQQPPMDVQSVDSYTSDNPDSNVIAKSPDKRSSLVSLSKVSPHLLSSTSSNGNTISCPNVATNSQELEPNNDISTKKSLSNSTLRHSSANRNSNYGDNKRPLRTTVSKIFDSNPNGAPLRRYSGVPDHVNLEDYIEQPHNYPTMQNSVKKDEFYNSRNNKFPHGLNFYGDNNVIEEENNGDSSNVNRPQHTNLQHEFIPEDNESDENDIHSMFYYNHKNDLETKPLISDYGEDEDVDDYDRPNATFNSYYGSASNTHELPLHGRMPSRSNNDYYDFMVGNNTGNNNQLNEYTPLRMKRGQRHLSRTNNSIMNGSIHMNGNDDVTHSNINNNDIVGYSPHNFYSRKSPFVKVKNFLYLAFVISSLLMTGFILGFLLATNKELQDVDVVVMDNVISSSDELIFDITVSAFNPGFFSISVSQVDLDIFAKSSYLKCDSNGDCTVMEQERKILQITTNLSLVEESANNDISGGNIETVLLGTAKKLETPLKFQGGAFNRNYDVSVSSVKLLSPGSREAKHENDDDDDDDGDDGDDENNTNERQYKSKPNARDDKEDDTKKWKLLIKHDYELIVRGSMKYEVPFFNTQKSTAIQKDSMVHPGKK</sequence>
<keyword id="KW-0325">Glycoprotein</keyword>
<keyword id="KW-0472">Membrane</keyword>
<keyword id="KW-0597">Phosphoprotein</keyword>
<keyword id="KW-1185">Reference proteome</keyword>
<keyword id="KW-0735">Signal-anchor</keyword>
<keyword id="KW-0812">Transmembrane</keyword>
<keyword id="KW-1133">Transmembrane helix</keyword>
<keyword id="KW-0926">Vacuole</keyword>
<comment type="function">
    <text evidence="3 4 5 7">The PI(3,5)P2 regulatory complex regulates both the synthesis and turnover of phosphatidylinositol 3,5-bisphosphate (PtdIns(3,5)P2). Positively regulates FAB1 kinase activity. Major activator of FAB1 during hyperosmotic shock and can elevate levels of PtdIns(3,5)P2 in the absence of VAC14 and FIG4. Directly involved in vacuolar membrane scission. Required for normal vacuole acidification, inheritance and morphology.</text>
</comment>
<comment type="subunit">
    <text evidence="5">Component of the PI(3,5)P2 regulatory complex, composed of ATG18, FIG4, FAB1, VAC14 and VAC7. VAC14 nucleates the assembly of the complex and serves as a scaffold.</text>
</comment>
<comment type="interaction">
    <interactant intactId="EBI-28714">
        <id>P53950</id>
    </interactant>
    <interactant intactId="EBI-27189">
        <id>Q06708</id>
        <label>VAC14</label>
    </interactant>
    <organismsDiffer>false</organismsDiffer>
    <experiments>4</experiments>
</comment>
<comment type="subcellular location">
    <subcellularLocation>
        <location evidence="5 7">Vacuole membrane</location>
        <topology evidence="5 7">Single-pass type II membrane protein</topology>
    </subcellularLocation>
</comment>
<comment type="PTM">
    <text evidence="6">N-glycosylated.</text>
</comment>
<proteinExistence type="evidence at protein level"/>
<name>VAC7_YEAST</name>
<protein>
    <recommendedName>
        <fullName>Vacuolar segregation protein 7</fullName>
    </recommendedName>
</protein>
<feature type="chain" id="PRO_0000065757" description="Vacuolar segregation protein 7">
    <location>
        <begin position="1"/>
        <end position="1165"/>
    </location>
</feature>
<feature type="topological domain" description="Cytoplasmic" evidence="1">
    <location>
        <begin position="1"/>
        <end position="919"/>
    </location>
</feature>
<feature type="transmembrane region" description="Helical; Signal-anchor for type II membrane protein" evidence="1">
    <location>
        <begin position="920"/>
        <end position="940"/>
    </location>
</feature>
<feature type="topological domain" description="Vacuolar" evidence="1">
    <location>
        <begin position="941"/>
        <end position="1165"/>
    </location>
</feature>
<feature type="region of interest" description="Disordered" evidence="2">
    <location>
        <begin position="118"/>
        <end position="147"/>
    </location>
</feature>
<feature type="region of interest" description="Disordered" evidence="2">
    <location>
        <begin position="215"/>
        <end position="241"/>
    </location>
</feature>
<feature type="region of interest" description="Disordered" evidence="2">
    <location>
        <begin position="274"/>
        <end position="423"/>
    </location>
</feature>
<feature type="region of interest" description="Disordered" evidence="2">
    <location>
        <begin position="461"/>
        <end position="497"/>
    </location>
</feature>
<feature type="region of interest" description="Disordered" evidence="2">
    <location>
        <begin position="560"/>
        <end position="668"/>
    </location>
</feature>
<feature type="region of interest" description="Disordered" evidence="2">
    <location>
        <begin position="1074"/>
        <end position="1121"/>
    </location>
</feature>
<feature type="compositionally biased region" description="Polar residues" evidence="2">
    <location>
        <begin position="216"/>
        <end position="230"/>
    </location>
</feature>
<feature type="compositionally biased region" description="Low complexity" evidence="2">
    <location>
        <begin position="334"/>
        <end position="345"/>
    </location>
</feature>
<feature type="compositionally biased region" description="Polar residues" evidence="2">
    <location>
        <begin position="346"/>
        <end position="367"/>
    </location>
</feature>
<feature type="compositionally biased region" description="Low complexity" evidence="2">
    <location>
        <begin position="375"/>
        <end position="391"/>
    </location>
</feature>
<feature type="compositionally biased region" description="Polar residues" evidence="2">
    <location>
        <begin position="393"/>
        <end position="412"/>
    </location>
</feature>
<feature type="compositionally biased region" description="Basic and acidic residues" evidence="2">
    <location>
        <begin position="413"/>
        <end position="423"/>
    </location>
</feature>
<feature type="compositionally biased region" description="Low complexity" evidence="2">
    <location>
        <begin position="469"/>
        <end position="485"/>
    </location>
</feature>
<feature type="compositionally biased region" description="Low complexity" evidence="2">
    <location>
        <begin position="562"/>
        <end position="571"/>
    </location>
</feature>
<feature type="compositionally biased region" description="Polar residues" evidence="2">
    <location>
        <begin position="576"/>
        <end position="587"/>
    </location>
</feature>
<feature type="compositionally biased region" description="Low complexity" evidence="2">
    <location>
        <begin position="599"/>
        <end position="613"/>
    </location>
</feature>
<feature type="compositionally biased region" description="Polar residues" evidence="2">
    <location>
        <begin position="614"/>
        <end position="662"/>
    </location>
</feature>
<feature type="compositionally biased region" description="Acidic residues" evidence="2">
    <location>
        <begin position="1085"/>
        <end position="1100"/>
    </location>
</feature>
<feature type="compositionally biased region" description="Basic and acidic residues" evidence="2">
    <location>
        <begin position="1111"/>
        <end position="1121"/>
    </location>
</feature>
<feature type="modified residue" description="Phosphoserine" evidence="8">
    <location>
        <position position="164"/>
    </location>
</feature>
<feature type="glycosylation site" description="N-linked (GlcNAc...) asparagine" evidence="1">
    <location>
        <position position="1020"/>
    </location>
</feature>
<feature type="glycosylation site" description="N-linked (GlcNAc...) asparagine" evidence="1">
    <location>
        <position position="1099"/>
    </location>
</feature>
<dbReference type="EMBL" id="U12141">
    <property type="protein sequence ID" value="AAA99658.1"/>
    <property type="molecule type" value="Genomic_DNA"/>
</dbReference>
<dbReference type="EMBL" id="Z71330">
    <property type="protein sequence ID" value="CAA95925.1"/>
    <property type="molecule type" value="Genomic_DNA"/>
</dbReference>
<dbReference type="EMBL" id="BK006947">
    <property type="protein sequence ID" value="DAA10491.1"/>
    <property type="molecule type" value="Genomic_DNA"/>
</dbReference>
<dbReference type="PIR" id="S62982">
    <property type="entry name" value="S62982"/>
</dbReference>
<dbReference type="RefSeq" id="NP_014344.3">
    <property type="nucleotide sequence ID" value="NM_001182893.3"/>
</dbReference>
<dbReference type="SMR" id="P53950"/>
<dbReference type="BioGRID" id="35770">
    <property type="interactions" value="393"/>
</dbReference>
<dbReference type="ComplexPortal" id="CPX-3088">
    <property type="entry name" value="PAS complex"/>
</dbReference>
<dbReference type="DIP" id="DIP-4368N"/>
<dbReference type="FunCoup" id="P53950">
    <property type="interactions" value="32"/>
</dbReference>
<dbReference type="IntAct" id="P53950">
    <property type="interactions" value="5"/>
</dbReference>
<dbReference type="MINT" id="P53950"/>
<dbReference type="STRING" id="4932.YNL054W"/>
<dbReference type="GlyCosmos" id="P53950">
    <property type="glycosylation" value="2 sites, No reported glycans"/>
</dbReference>
<dbReference type="GlyGen" id="P53950">
    <property type="glycosylation" value="5 sites, 1 O-linked glycan (3 sites)"/>
</dbReference>
<dbReference type="iPTMnet" id="P53950"/>
<dbReference type="PaxDb" id="4932-YNL054W"/>
<dbReference type="PeptideAtlas" id="P53950"/>
<dbReference type="EnsemblFungi" id="YNL054W_mRNA">
    <property type="protein sequence ID" value="YNL054W"/>
    <property type="gene ID" value="YNL054W"/>
</dbReference>
<dbReference type="GeneID" id="855673"/>
<dbReference type="KEGG" id="sce:YNL054W"/>
<dbReference type="AGR" id="SGD:S000004999"/>
<dbReference type="SGD" id="S000004999">
    <property type="gene designation" value="VAC7"/>
</dbReference>
<dbReference type="VEuPathDB" id="FungiDB:YNL054W"/>
<dbReference type="eggNOG" id="ENOG502QU5B">
    <property type="taxonomic scope" value="Eukaryota"/>
</dbReference>
<dbReference type="HOGENOM" id="CLU_006002_0_0_1"/>
<dbReference type="InParanoid" id="P53950"/>
<dbReference type="OMA" id="GNTISCP"/>
<dbReference type="OrthoDB" id="1204at2759"/>
<dbReference type="BioCyc" id="MetaCyc:G3O-33086-MONOMER"/>
<dbReference type="BioCyc" id="YEAST:G3O-33086-MONOMER"/>
<dbReference type="BioGRID-ORCS" id="855673">
    <property type="hits" value="8 hits in 10 CRISPR screens"/>
</dbReference>
<dbReference type="PRO" id="PR:P53950"/>
<dbReference type="Proteomes" id="UP000002311">
    <property type="component" value="Chromosome XIV"/>
</dbReference>
<dbReference type="RNAct" id="P53950">
    <property type="molecule type" value="protein"/>
</dbReference>
<dbReference type="GO" id="GO:0005737">
    <property type="term" value="C:cytoplasm"/>
    <property type="evidence" value="ECO:0007005"/>
    <property type="project" value="SGD"/>
</dbReference>
<dbReference type="GO" id="GO:0000329">
    <property type="term" value="C:fungal-type vacuole membrane"/>
    <property type="evidence" value="ECO:0000314"/>
    <property type="project" value="SGD"/>
</dbReference>
<dbReference type="GO" id="GO:0016020">
    <property type="term" value="C:membrane"/>
    <property type="evidence" value="ECO:0000314"/>
    <property type="project" value="SGD"/>
</dbReference>
<dbReference type="GO" id="GO:0070772">
    <property type="term" value="C:PAS complex"/>
    <property type="evidence" value="ECO:0000314"/>
    <property type="project" value="SGD"/>
</dbReference>
<dbReference type="GO" id="GO:0005774">
    <property type="term" value="C:vacuolar membrane"/>
    <property type="evidence" value="ECO:0000314"/>
    <property type="project" value="UniProtKB"/>
</dbReference>
<dbReference type="GO" id="GO:0008047">
    <property type="term" value="F:enzyme activator activity"/>
    <property type="evidence" value="ECO:0000316"/>
    <property type="project" value="SGD"/>
</dbReference>
<dbReference type="GO" id="GO:1903100">
    <property type="term" value="P:1-phosphatidyl-1D-myo-inositol 3,5-bisphosphate metabolic process"/>
    <property type="evidence" value="ECO:0000303"/>
    <property type="project" value="ComplexPortal"/>
</dbReference>
<dbReference type="GO" id="GO:0010513">
    <property type="term" value="P:positive regulation of phosphatidylinositol biosynthetic process"/>
    <property type="evidence" value="ECO:0000316"/>
    <property type="project" value="SGD"/>
</dbReference>
<dbReference type="GO" id="GO:1903778">
    <property type="term" value="P:protein localization to vacuolar membrane"/>
    <property type="evidence" value="ECO:0000315"/>
    <property type="project" value="SGD"/>
</dbReference>
<dbReference type="GO" id="GO:0010511">
    <property type="term" value="P:regulation of phosphatidylinositol biosynthetic process"/>
    <property type="evidence" value="ECO:0000303"/>
    <property type="project" value="ComplexPortal"/>
</dbReference>
<dbReference type="GO" id="GO:0000011">
    <property type="term" value="P:vacuole inheritance"/>
    <property type="evidence" value="ECO:0000318"/>
    <property type="project" value="GO_Central"/>
</dbReference>
<dbReference type="InterPro" id="IPR024260">
    <property type="entry name" value="Vac7"/>
</dbReference>
<dbReference type="PANTHER" id="PTHR28258">
    <property type="entry name" value="VACUOLAR SEGREGATION PROTEIN 7"/>
    <property type="match status" value="1"/>
</dbReference>
<dbReference type="PANTHER" id="PTHR28258:SF1">
    <property type="entry name" value="VACUOLAR SEGREGATION PROTEIN 7"/>
    <property type="match status" value="1"/>
</dbReference>
<dbReference type="Pfam" id="PF12751">
    <property type="entry name" value="Vac7"/>
    <property type="match status" value="2"/>
</dbReference>
<reference key="1">
    <citation type="journal article" date="1997" name="Mol. Cell. Biol.">
        <title>Vac7p, a novel vacuolar protein, is required for normal vacuole inheritance and morphology.</title>
        <authorList>
            <person name="Bonangelino C.J."/>
            <person name="Catlett N.L."/>
            <person name="Weisman L.S."/>
        </authorList>
    </citation>
    <scope>NUCLEOTIDE SEQUENCE [GENOMIC DNA]</scope>
    <scope>FUNCTION</scope>
    <scope>TOPOLOGY</scope>
    <scope>SUBCELLULAR LOCATION</scope>
</reference>
<reference key="2">
    <citation type="journal article" date="1995" name="Yeast">
        <title>The sequence of a 44 420 bp fragment located on the left arm of chromosome XIV from Saccharomyces cerevisiae.</title>
        <authorList>
            <person name="Bergez P."/>
            <person name="Doignon F."/>
            <person name="Crouzet M."/>
        </authorList>
    </citation>
    <scope>NUCLEOTIDE SEQUENCE [GENOMIC DNA]</scope>
    <source>
        <strain>S288c / FY1676</strain>
    </source>
</reference>
<reference key="3">
    <citation type="journal article" date="1996" name="Yeast">
        <authorList>
            <person name="Bergez P."/>
            <person name="Doignon F."/>
            <person name="Crouzet M."/>
        </authorList>
    </citation>
    <scope>ERRATUM OF PUBMED:8533472</scope>
</reference>
<reference key="4">
    <citation type="journal article" date="1997" name="Nature">
        <title>The nucleotide sequence of Saccharomyces cerevisiae chromosome XIV and its evolutionary implications.</title>
        <authorList>
            <person name="Philippsen P."/>
            <person name="Kleine K."/>
            <person name="Poehlmann R."/>
            <person name="Duesterhoeft A."/>
            <person name="Hamberg K."/>
            <person name="Hegemann J.H."/>
            <person name="Obermaier B."/>
            <person name="Urrestarazu L.A."/>
            <person name="Aert R."/>
            <person name="Albermann K."/>
            <person name="Altmann R."/>
            <person name="Andre B."/>
            <person name="Baladron V."/>
            <person name="Ballesta J.P.G."/>
            <person name="Becam A.-M."/>
            <person name="Beinhauer J.D."/>
            <person name="Boskovic J."/>
            <person name="Buitrago M.J."/>
            <person name="Bussereau F."/>
            <person name="Coster F."/>
            <person name="Crouzet M."/>
            <person name="D'Angelo M."/>
            <person name="Dal Pero F."/>
            <person name="De Antoni A."/>
            <person name="del Rey F."/>
            <person name="Doignon F."/>
            <person name="Domdey H."/>
            <person name="Dubois E."/>
            <person name="Fiedler T.A."/>
            <person name="Fleig U."/>
            <person name="Floeth M."/>
            <person name="Fritz C."/>
            <person name="Gaillardin C."/>
            <person name="Garcia-Cantalejo J.M."/>
            <person name="Glansdorff N."/>
            <person name="Goffeau A."/>
            <person name="Gueldener U."/>
            <person name="Herbert C.J."/>
            <person name="Heumann K."/>
            <person name="Heuss-Neitzel D."/>
            <person name="Hilbert H."/>
            <person name="Hinni K."/>
            <person name="Iraqui Houssaini I."/>
            <person name="Jacquet M."/>
            <person name="Jimenez A."/>
            <person name="Jonniaux J.-L."/>
            <person name="Karpfinger-Hartl L."/>
            <person name="Lanfranchi G."/>
            <person name="Lepingle A."/>
            <person name="Levesque H."/>
            <person name="Lyck R."/>
            <person name="Maftahi M."/>
            <person name="Mallet L."/>
            <person name="Maurer C.T.C."/>
            <person name="Messenguy F."/>
            <person name="Mewes H.-W."/>
            <person name="Moestl D."/>
            <person name="Nasr F."/>
            <person name="Nicaud J.-M."/>
            <person name="Niedenthal R.K."/>
            <person name="Pandolfo D."/>
            <person name="Pierard A."/>
            <person name="Piravandi E."/>
            <person name="Planta R.J."/>
            <person name="Pohl T.M."/>
            <person name="Purnelle B."/>
            <person name="Rebischung C."/>
            <person name="Remacha M.A."/>
            <person name="Revuelta J.L."/>
            <person name="Rinke M."/>
            <person name="Saiz J.E."/>
            <person name="Sartorello F."/>
            <person name="Scherens B."/>
            <person name="Sen-Gupta M."/>
            <person name="Soler-Mira A."/>
            <person name="Urbanus J.H.M."/>
            <person name="Valle G."/>
            <person name="Van Dyck L."/>
            <person name="Verhasselt P."/>
            <person name="Vierendeels F."/>
            <person name="Vissers S."/>
            <person name="Voet M."/>
            <person name="Volckaert G."/>
            <person name="Wach A."/>
            <person name="Wambutt R."/>
            <person name="Wedler H."/>
            <person name="Zollner A."/>
            <person name="Hani J."/>
        </authorList>
    </citation>
    <scope>NUCLEOTIDE SEQUENCE [LARGE SCALE GENOMIC DNA]</scope>
    <source>
        <strain>ATCC 204508 / S288c</strain>
    </source>
</reference>
<reference key="5">
    <citation type="journal article" date="2014" name="G3 (Bethesda)">
        <title>The reference genome sequence of Saccharomyces cerevisiae: Then and now.</title>
        <authorList>
            <person name="Engel S.R."/>
            <person name="Dietrich F.S."/>
            <person name="Fisk D.G."/>
            <person name="Binkley G."/>
            <person name="Balakrishnan R."/>
            <person name="Costanzo M.C."/>
            <person name="Dwight S.S."/>
            <person name="Hitz B.C."/>
            <person name="Karra K."/>
            <person name="Nash R.S."/>
            <person name="Weng S."/>
            <person name="Wong E.D."/>
            <person name="Lloyd P."/>
            <person name="Skrzypek M.S."/>
            <person name="Miyasato S.R."/>
            <person name="Simison M."/>
            <person name="Cherry J.M."/>
        </authorList>
    </citation>
    <scope>GENOME REANNOTATION</scope>
    <source>
        <strain>ATCC 204508 / S288c</strain>
    </source>
</reference>
<reference key="6">
    <citation type="journal article" date="2002" name="Mol. Biol. Cell">
        <title>Regulation of Fab1 phosphatidylinositol 3-phosphate 5-kinase pathway by Vac7 protein and Fig4, a polyphosphoinositide phosphatase family member.</title>
        <authorList>
            <person name="Gary J.D."/>
            <person name="Sato T.K."/>
            <person name="Stefan C.J."/>
            <person name="Bonangelino C.J."/>
            <person name="Weisman L.S."/>
            <person name="Emr S.D."/>
        </authorList>
    </citation>
    <scope>FUNCTION</scope>
</reference>
<reference key="7">
    <citation type="journal article" date="2006" name="J. Cell Biol.">
        <title>The Vac14p-Fig4p complex acts independently of Vac7p and couples PI3,5P2 synthesis and turnover.</title>
        <authorList>
            <person name="Duex J.E."/>
            <person name="Tang F."/>
            <person name="Weisman L.S."/>
        </authorList>
    </citation>
    <scope>FUNCTION</scope>
</reference>
<reference key="8">
    <citation type="journal article" date="2008" name="EMBO J.">
        <title>VAC14 nucleates a protein complex essential for the acute interconversion of PI3P and PI(3,5)P(2) in yeast and mouse.</title>
        <authorList>
            <person name="Jin N."/>
            <person name="Chow C.Y."/>
            <person name="Liu L."/>
            <person name="Zolov S.N."/>
            <person name="Bronson R."/>
            <person name="Davisson M."/>
            <person name="Petersen J.L."/>
            <person name="Zhang Y."/>
            <person name="Park S."/>
            <person name="Duex J.E."/>
            <person name="Goldowitz D."/>
            <person name="Meisler M.H."/>
            <person name="Weisman L.S."/>
        </authorList>
    </citation>
    <scope>IDENTIFICATION IN THE PI(3,5)P2 REGULATORY COMPLEX</scope>
    <scope>FUNCTION</scope>
    <scope>SUBCELLULAR LOCATION</scope>
</reference>
<reference key="9">
    <citation type="journal article" date="2008" name="Mol. Cell. Proteomics">
        <title>A multidimensional chromatography technology for in-depth phosphoproteome analysis.</title>
        <authorList>
            <person name="Albuquerque C.P."/>
            <person name="Smolka M.B."/>
            <person name="Payne S.H."/>
            <person name="Bafna V."/>
            <person name="Eng J."/>
            <person name="Zhou H."/>
        </authorList>
    </citation>
    <scope>IDENTIFICATION BY MASS SPECTROMETRY [LARGE SCALE ANALYSIS]</scope>
</reference>
<reference key="10">
    <citation type="journal article" date="2009" name="Mol. Syst. Biol.">
        <title>Global analysis of the glycoproteome in Saccharomyces cerevisiae reveals new roles for protein glycosylation in eukaryotes.</title>
        <authorList>
            <person name="Kung L.A."/>
            <person name="Tao S.-C."/>
            <person name="Qian J."/>
            <person name="Smith M.G."/>
            <person name="Snyder M."/>
            <person name="Zhu H."/>
        </authorList>
    </citation>
    <scope>GLYCOSYLATION [LARGE SCALE ANALYSIS]</scope>
</reference>
<reference key="11">
    <citation type="journal article" date="2009" name="Science">
        <title>Global analysis of Cdk1 substrate phosphorylation sites provides insights into evolution.</title>
        <authorList>
            <person name="Holt L.J."/>
            <person name="Tuch B.B."/>
            <person name="Villen J."/>
            <person name="Johnson A.D."/>
            <person name="Gygi S.P."/>
            <person name="Morgan D.O."/>
        </authorList>
    </citation>
    <scope>PHOSPHORYLATION [LARGE SCALE ANALYSIS] AT SER-164</scope>
    <scope>IDENTIFICATION BY MASS SPECTROMETRY [LARGE SCALE ANALYSIS]</scope>
</reference>
<organism>
    <name type="scientific">Saccharomyces cerevisiae (strain ATCC 204508 / S288c)</name>
    <name type="common">Baker's yeast</name>
    <dbReference type="NCBI Taxonomy" id="559292"/>
    <lineage>
        <taxon>Eukaryota</taxon>
        <taxon>Fungi</taxon>
        <taxon>Dikarya</taxon>
        <taxon>Ascomycota</taxon>
        <taxon>Saccharomycotina</taxon>
        <taxon>Saccharomycetes</taxon>
        <taxon>Saccharomycetales</taxon>
        <taxon>Saccharomycetaceae</taxon>
        <taxon>Saccharomyces</taxon>
    </lineage>
</organism>
<accession>P53950</accession>
<accession>D6W1C5</accession>
<gene>
    <name type="primary">VAC7</name>
    <name type="ordered locus">YNL054W</name>
    <name type="ORF">N2467</name>
    <name type="ORF">YNL2467W</name>
</gene>